<accession>Q7MEH7</accession>
<evidence type="ECO:0000255" key="1">
    <source>
        <dbReference type="HAMAP-Rule" id="MF_00051"/>
    </source>
</evidence>
<evidence type="ECO:0000305" key="2"/>
<dbReference type="EC" id="2.1.2.1" evidence="1"/>
<dbReference type="EMBL" id="BA000038">
    <property type="protein sequence ID" value="BAC96719.1"/>
    <property type="status" value="ALT_INIT"/>
    <property type="molecule type" value="Genomic_DNA"/>
</dbReference>
<dbReference type="RefSeq" id="WP_043877501.1">
    <property type="nucleotide sequence ID" value="NC_005140.1"/>
</dbReference>
<dbReference type="SMR" id="Q7MEH7"/>
<dbReference type="STRING" id="672.VV93_v1c36920"/>
<dbReference type="KEGG" id="vvy:VVA0693"/>
<dbReference type="PATRIC" id="fig|196600.6.peg.3888"/>
<dbReference type="eggNOG" id="COG0112">
    <property type="taxonomic scope" value="Bacteria"/>
</dbReference>
<dbReference type="HOGENOM" id="CLU_022477_2_0_6"/>
<dbReference type="UniPathway" id="UPA00193"/>
<dbReference type="UniPathway" id="UPA00288">
    <property type="reaction ID" value="UER01023"/>
</dbReference>
<dbReference type="Proteomes" id="UP000002675">
    <property type="component" value="Chromosome II"/>
</dbReference>
<dbReference type="GO" id="GO:0005829">
    <property type="term" value="C:cytosol"/>
    <property type="evidence" value="ECO:0007669"/>
    <property type="project" value="TreeGrafter"/>
</dbReference>
<dbReference type="GO" id="GO:0004372">
    <property type="term" value="F:glycine hydroxymethyltransferase activity"/>
    <property type="evidence" value="ECO:0007669"/>
    <property type="project" value="UniProtKB-UniRule"/>
</dbReference>
<dbReference type="GO" id="GO:0030170">
    <property type="term" value="F:pyridoxal phosphate binding"/>
    <property type="evidence" value="ECO:0007669"/>
    <property type="project" value="UniProtKB-UniRule"/>
</dbReference>
<dbReference type="GO" id="GO:0019264">
    <property type="term" value="P:glycine biosynthetic process from serine"/>
    <property type="evidence" value="ECO:0007669"/>
    <property type="project" value="UniProtKB-UniRule"/>
</dbReference>
<dbReference type="GO" id="GO:0035999">
    <property type="term" value="P:tetrahydrofolate interconversion"/>
    <property type="evidence" value="ECO:0007669"/>
    <property type="project" value="UniProtKB-UniRule"/>
</dbReference>
<dbReference type="CDD" id="cd00378">
    <property type="entry name" value="SHMT"/>
    <property type="match status" value="1"/>
</dbReference>
<dbReference type="FunFam" id="3.40.640.10:FF:000001">
    <property type="entry name" value="Serine hydroxymethyltransferase"/>
    <property type="match status" value="1"/>
</dbReference>
<dbReference type="FunFam" id="3.90.1150.10:FF:000003">
    <property type="entry name" value="Serine hydroxymethyltransferase"/>
    <property type="match status" value="1"/>
</dbReference>
<dbReference type="Gene3D" id="3.90.1150.10">
    <property type="entry name" value="Aspartate Aminotransferase, domain 1"/>
    <property type="match status" value="1"/>
</dbReference>
<dbReference type="Gene3D" id="3.40.640.10">
    <property type="entry name" value="Type I PLP-dependent aspartate aminotransferase-like (Major domain)"/>
    <property type="match status" value="1"/>
</dbReference>
<dbReference type="HAMAP" id="MF_00051">
    <property type="entry name" value="SHMT"/>
    <property type="match status" value="1"/>
</dbReference>
<dbReference type="InterPro" id="IPR015424">
    <property type="entry name" value="PyrdxlP-dep_Trfase"/>
</dbReference>
<dbReference type="InterPro" id="IPR015421">
    <property type="entry name" value="PyrdxlP-dep_Trfase_major"/>
</dbReference>
<dbReference type="InterPro" id="IPR015422">
    <property type="entry name" value="PyrdxlP-dep_Trfase_small"/>
</dbReference>
<dbReference type="InterPro" id="IPR001085">
    <property type="entry name" value="Ser_HO-MeTrfase"/>
</dbReference>
<dbReference type="InterPro" id="IPR049943">
    <property type="entry name" value="Ser_HO-MeTrfase-like"/>
</dbReference>
<dbReference type="InterPro" id="IPR019798">
    <property type="entry name" value="Ser_HO-MeTrfase_PLP_BS"/>
</dbReference>
<dbReference type="InterPro" id="IPR039429">
    <property type="entry name" value="SHMT-like_dom"/>
</dbReference>
<dbReference type="NCBIfam" id="NF000586">
    <property type="entry name" value="PRK00011.1"/>
    <property type="match status" value="1"/>
</dbReference>
<dbReference type="PANTHER" id="PTHR11680">
    <property type="entry name" value="SERINE HYDROXYMETHYLTRANSFERASE"/>
    <property type="match status" value="1"/>
</dbReference>
<dbReference type="PANTHER" id="PTHR11680:SF35">
    <property type="entry name" value="SERINE HYDROXYMETHYLTRANSFERASE 1"/>
    <property type="match status" value="1"/>
</dbReference>
<dbReference type="Pfam" id="PF00464">
    <property type="entry name" value="SHMT"/>
    <property type="match status" value="1"/>
</dbReference>
<dbReference type="PIRSF" id="PIRSF000412">
    <property type="entry name" value="SHMT"/>
    <property type="match status" value="1"/>
</dbReference>
<dbReference type="SUPFAM" id="SSF53383">
    <property type="entry name" value="PLP-dependent transferases"/>
    <property type="match status" value="1"/>
</dbReference>
<dbReference type="PROSITE" id="PS00096">
    <property type="entry name" value="SHMT"/>
    <property type="match status" value="1"/>
</dbReference>
<gene>
    <name evidence="1" type="primary">glyA2</name>
    <name type="ordered locus">VVA0693</name>
</gene>
<organism>
    <name type="scientific">Vibrio vulnificus (strain YJ016)</name>
    <dbReference type="NCBI Taxonomy" id="196600"/>
    <lineage>
        <taxon>Bacteria</taxon>
        <taxon>Pseudomonadati</taxon>
        <taxon>Pseudomonadota</taxon>
        <taxon>Gammaproteobacteria</taxon>
        <taxon>Vibrionales</taxon>
        <taxon>Vibrionaceae</taxon>
        <taxon>Vibrio</taxon>
    </lineage>
</organism>
<protein>
    <recommendedName>
        <fullName evidence="1">Serine hydroxymethyltransferase 2</fullName>
        <shortName evidence="1">SHMT 2</shortName>
        <shortName evidence="1">Serine methylase 2</shortName>
        <ecNumber evidence="1">2.1.2.1</ecNumber>
    </recommendedName>
</protein>
<comment type="function">
    <text evidence="1">Catalyzes the reversible interconversion of serine and glycine with tetrahydrofolate (THF) serving as the one-carbon carrier. This reaction serves as the major source of one-carbon groups required for the biosynthesis of purines, thymidylate, methionine, and other important biomolecules. Also exhibits THF-independent aldolase activity toward beta-hydroxyamino acids, producing glycine and aldehydes, via a retro-aldol mechanism.</text>
</comment>
<comment type="catalytic activity">
    <reaction evidence="1">
        <text>(6R)-5,10-methylene-5,6,7,8-tetrahydrofolate + glycine + H2O = (6S)-5,6,7,8-tetrahydrofolate + L-serine</text>
        <dbReference type="Rhea" id="RHEA:15481"/>
        <dbReference type="ChEBI" id="CHEBI:15377"/>
        <dbReference type="ChEBI" id="CHEBI:15636"/>
        <dbReference type="ChEBI" id="CHEBI:33384"/>
        <dbReference type="ChEBI" id="CHEBI:57305"/>
        <dbReference type="ChEBI" id="CHEBI:57453"/>
        <dbReference type="EC" id="2.1.2.1"/>
    </reaction>
</comment>
<comment type="cofactor">
    <cofactor evidence="1">
        <name>pyridoxal 5'-phosphate</name>
        <dbReference type="ChEBI" id="CHEBI:597326"/>
    </cofactor>
</comment>
<comment type="pathway">
    <text evidence="1">One-carbon metabolism; tetrahydrofolate interconversion.</text>
</comment>
<comment type="pathway">
    <text evidence="1">Amino-acid biosynthesis; glycine biosynthesis; glycine from L-serine: step 1/1.</text>
</comment>
<comment type="subunit">
    <text evidence="1">Homodimer.</text>
</comment>
<comment type="subcellular location">
    <subcellularLocation>
        <location evidence="1">Cytoplasm</location>
    </subcellularLocation>
</comment>
<comment type="similarity">
    <text evidence="1">Belongs to the SHMT family.</text>
</comment>
<comment type="sequence caution" evidence="2">
    <conflict type="erroneous initiation">
        <sequence resource="EMBL-CDS" id="BAC96719"/>
    </conflict>
</comment>
<keyword id="KW-0028">Amino-acid biosynthesis</keyword>
<keyword id="KW-0963">Cytoplasm</keyword>
<keyword id="KW-0554">One-carbon metabolism</keyword>
<keyword id="KW-0663">Pyridoxal phosphate</keyword>
<keyword id="KW-0808">Transferase</keyword>
<feature type="chain" id="PRO_0000113697" description="Serine hydroxymethyltransferase 2">
    <location>
        <begin position="1"/>
        <end position="431"/>
    </location>
</feature>
<feature type="binding site" evidence="1">
    <location>
        <position position="131"/>
    </location>
    <ligand>
        <name>(6S)-5,6,7,8-tetrahydrofolate</name>
        <dbReference type="ChEBI" id="CHEBI:57453"/>
    </ligand>
</feature>
<feature type="binding site" evidence="1">
    <location>
        <begin position="135"/>
        <end position="137"/>
    </location>
    <ligand>
        <name>(6S)-5,6,7,8-tetrahydrofolate</name>
        <dbReference type="ChEBI" id="CHEBI:57453"/>
    </ligand>
</feature>
<feature type="binding site" evidence="1">
    <location>
        <position position="256"/>
    </location>
    <ligand>
        <name>(6S)-5,6,7,8-tetrahydrofolate</name>
        <dbReference type="ChEBI" id="CHEBI:57453"/>
    </ligand>
</feature>
<feature type="site" description="Plays an important role in substrate specificity" evidence="1">
    <location>
        <position position="239"/>
    </location>
</feature>
<feature type="modified residue" description="N6-(pyridoxal phosphate)lysine" evidence="1">
    <location>
        <position position="240"/>
    </location>
</feature>
<name>GLYA2_VIBVY</name>
<reference key="1">
    <citation type="journal article" date="2003" name="Genome Res.">
        <title>Comparative genome analysis of Vibrio vulnificus, a marine pathogen.</title>
        <authorList>
            <person name="Chen C.-Y."/>
            <person name="Wu K.-M."/>
            <person name="Chang Y.-C."/>
            <person name="Chang C.-H."/>
            <person name="Tsai H.-C."/>
            <person name="Liao T.-L."/>
            <person name="Liu Y.-M."/>
            <person name="Chen H.-J."/>
            <person name="Shen A.B.-T."/>
            <person name="Li J.-C."/>
            <person name="Su T.-L."/>
            <person name="Shao C.-P."/>
            <person name="Lee C.-T."/>
            <person name="Hor L.-I."/>
            <person name="Tsai S.-F."/>
        </authorList>
    </citation>
    <scope>NUCLEOTIDE SEQUENCE [LARGE SCALE GENOMIC DNA]</scope>
    <source>
        <strain>YJ016</strain>
    </source>
</reference>
<proteinExistence type="inferred from homology"/>
<sequence length="431" mass="46459">MNSHYQNHSLENFFSTNLSATDDAVFAGIQAEFTRQNEQIELIASENIVSKAVMQAQGTCLTNKYAEGYPGRRYYGGCEHVDTVEAIAIERAKKLFNCEYANVQPHSGAQANGAVKLALLQPGDTIMGMSLDAGGHLTHGARPALSGKWFNAVQYGVDKETLEINYDDVRALAVEHKPKMIIAGGSAIPRVIDFAKFREIADEVGAILMVDMAHIAGLIATGAHPSPLPHAHVVTTTTHKTLRGPRGGMILTNHEEIIKKINSAVFPGLQGGPLMHVIAAKAVAFGEALGPEFKTYIDSVINNAKVLAEVLQTRGCDIVTGGTDTHLMLVDLRPKGLKGNKAEEALERAGITCNKNGIPFDTEKPMITSGVRLGTPAGTSRGFGAEEFKLIGHWIGDVLDGLVENPEGNAEVEQRVRKEVKALCSRFPLYQ</sequence>